<dbReference type="EMBL" id="AP008955">
    <property type="protein sequence ID" value="BAH46424.1"/>
    <property type="molecule type" value="Genomic_DNA"/>
</dbReference>
<dbReference type="RefSeq" id="WP_015893617.1">
    <property type="nucleotide sequence ID" value="NC_012491.1"/>
</dbReference>
<dbReference type="SMR" id="C0Z775"/>
<dbReference type="STRING" id="358681.BBR47_54470"/>
<dbReference type="KEGG" id="bbe:BBR47_54470"/>
<dbReference type="eggNOG" id="COG0355">
    <property type="taxonomic scope" value="Bacteria"/>
</dbReference>
<dbReference type="HOGENOM" id="CLU_084338_1_2_9"/>
<dbReference type="Proteomes" id="UP000001877">
    <property type="component" value="Chromosome"/>
</dbReference>
<dbReference type="GO" id="GO:0005886">
    <property type="term" value="C:plasma membrane"/>
    <property type="evidence" value="ECO:0007669"/>
    <property type="project" value="UniProtKB-SubCell"/>
</dbReference>
<dbReference type="GO" id="GO:0045259">
    <property type="term" value="C:proton-transporting ATP synthase complex"/>
    <property type="evidence" value="ECO:0007669"/>
    <property type="project" value="UniProtKB-KW"/>
</dbReference>
<dbReference type="GO" id="GO:0005524">
    <property type="term" value="F:ATP binding"/>
    <property type="evidence" value="ECO:0007669"/>
    <property type="project" value="UniProtKB-UniRule"/>
</dbReference>
<dbReference type="GO" id="GO:0046933">
    <property type="term" value="F:proton-transporting ATP synthase activity, rotational mechanism"/>
    <property type="evidence" value="ECO:0007669"/>
    <property type="project" value="UniProtKB-UniRule"/>
</dbReference>
<dbReference type="CDD" id="cd12152">
    <property type="entry name" value="F1-ATPase_delta"/>
    <property type="match status" value="1"/>
</dbReference>
<dbReference type="FunFam" id="1.20.5.440:FF:000001">
    <property type="entry name" value="ATP synthase epsilon chain"/>
    <property type="match status" value="1"/>
</dbReference>
<dbReference type="FunFam" id="2.60.15.10:FF:000001">
    <property type="entry name" value="ATP synthase epsilon chain"/>
    <property type="match status" value="1"/>
</dbReference>
<dbReference type="Gene3D" id="1.20.5.440">
    <property type="entry name" value="ATP synthase delta/epsilon subunit, C-terminal domain"/>
    <property type="match status" value="1"/>
</dbReference>
<dbReference type="Gene3D" id="2.60.15.10">
    <property type="entry name" value="F0F1 ATP synthase delta/epsilon subunit, N-terminal"/>
    <property type="match status" value="1"/>
</dbReference>
<dbReference type="HAMAP" id="MF_00530">
    <property type="entry name" value="ATP_synth_epsil_bac"/>
    <property type="match status" value="1"/>
</dbReference>
<dbReference type="InterPro" id="IPR036794">
    <property type="entry name" value="ATP_F1_dsu/esu_C_sf"/>
</dbReference>
<dbReference type="InterPro" id="IPR001469">
    <property type="entry name" value="ATP_synth_F1_dsu/esu"/>
</dbReference>
<dbReference type="InterPro" id="IPR020546">
    <property type="entry name" value="ATP_synth_F1_dsu/esu_N"/>
</dbReference>
<dbReference type="InterPro" id="IPR020547">
    <property type="entry name" value="ATP_synth_F1_esu_C"/>
</dbReference>
<dbReference type="InterPro" id="IPR036771">
    <property type="entry name" value="ATPsynth_dsu/esu_N"/>
</dbReference>
<dbReference type="NCBIfam" id="TIGR01216">
    <property type="entry name" value="ATP_synt_epsi"/>
    <property type="match status" value="1"/>
</dbReference>
<dbReference type="NCBIfam" id="NF001846">
    <property type="entry name" value="PRK00571.1-3"/>
    <property type="match status" value="1"/>
</dbReference>
<dbReference type="NCBIfam" id="NF009977">
    <property type="entry name" value="PRK13442.1"/>
    <property type="match status" value="1"/>
</dbReference>
<dbReference type="NCBIfam" id="NF009980">
    <property type="entry name" value="PRK13446.1"/>
    <property type="match status" value="1"/>
</dbReference>
<dbReference type="PANTHER" id="PTHR13822">
    <property type="entry name" value="ATP SYNTHASE DELTA/EPSILON CHAIN"/>
    <property type="match status" value="1"/>
</dbReference>
<dbReference type="PANTHER" id="PTHR13822:SF10">
    <property type="entry name" value="ATP SYNTHASE EPSILON CHAIN, CHLOROPLASTIC"/>
    <property type="match status" value="1"/>
</dbReference>
<dbReference type="Pfam" id="PF00401">
    <property type="entry name" value="ATP-synt_DE"/>
    <property type="match status" value="1"/>
</dbReference>
<dbReference type="Pfam" id="PF02823">
    <property type="entry name" value="ATP-synt_DE_N"/>
    <property type="match status" value="1"/>
</dbReference>
<dbReference type="SUPFAM" id="SSF46604">
    <property type="entry name" value="Epsilon subunit of F1F0-ATP synthase C-terminal domain"/>
    <property type="match status" value="1"/>
</dbReference>
<dbReference type="SUPFAM" id="SSF51344">
    <property type="entry name" value="Epsilon subunit of F1F0-ATP synthase N-terminal domain"/>
    <property type="match status" value="1"/>
</dbReference>
<accession>C0Z775</accession>
<proteinExistence type="inferred from homology"/>
<comment type="function">
    <text evidence="1">Produces ATP from ADP in the presence of a proton gradient across the membrane.</text>
</comment>
<comment type="subunit">
    <text evidence="1">F-type ATPases have 2 components, CF(1) - the catalytic core - and CF(0) - the membrane proton channel. CF(1) has five subunits: alpha(3), beta(3), gamma(1), delta(1), epsilon(1). CF(0) has three main subunits: a, b and c.</text>
</comment>
<comment type="subcellular location">
    <subcellularLocation>
        <location evidence="1">Cell membrane</location>
        <topology evidence="1">Peripheral membrane protein</topology>
    </subcellularLocation>
</comment>
<comment type="similarity">
    <text evidence="1">Belongs to the ATPase epsilon chain family.</text>
</comment>
<feature type="chain" id="PRO_1000211777" description="ATP synthase epsilon chain">
    <location>
        <begin position="1"/>
        <end position="132"/>
    </location>
</feature>
<gene>
    <name evidence="1" type="primary">atpC</name>
    <name type="ordered locus">BBR47_54470</name>
</gene>
<name>ATPE_BREBN</name>
<evidence type="ECO:0000255" key="1">
    <source>
        <dbReference type="HAMAP-Rule" id="MF_00530"/>
    </source>
</evidence>
<protein>
    <recommendedName>
        <fullName evidence="1">ATP synthase epsilon chain</fullName>
    </recommendedName>
    <alternativeName>
        <fullName evidence="1">ATP synthase F1 sector epsilon subunit</fullName>
    </alternativeName>
    <alternativeName>
        <fullName evidence="1">F-ATPase epsilon subunit</fullName>
    </alternativeName>
</protein>
<keyword id="KW-0066">ATP synthesis</keyword>
<keyword id="KW-1003">Cell membrane</keyword>
<keyword id="KW-0139">CF(1)</keyword>
<keyword id="KW-0375">Hydrogen ion transport</keyword>
<keyword id="KW-0406">Ion transport</keyword>
<keyword id="KW-0472">Membrane</keyword>
<keyword id="KW-1185">Reference proteome</keyword>
<keyword id="KW-0813">Transport</keyword>
<sequence>MSKMTVEVVTPERVVYSGQAEMVIARGLQGEIGIMPNHMPLVTPLKTAPVRIKTEGDKEVKMAVSGGFMEVRGDKVTILAETAELPGDIDVERAKAARERAEKRLTEKYAELDVKRAERALQRAMARLDVSK</sequence>
<reference key="1">
    <citation type="submission" date="2005-03" db="EMBL/GenBank/DDBJ databases">
        <title>Brevibacillus brevis strain 47, complete genome.</title>
        <authorList>
            <person name="Hosoyama A."/>
            <person name="Yamada R."/>
            <person name="Hongo Y."/>
            <person name="Terui Y."/>
            <person name="Ankai A."/>
            <person name="Masuyama W."/>
            <person name="Sekiguchi M."/>
            <person name="Takeda T."/>
            <person name="Asano K."/>
            <person name="Ohji S."/>
            <person name="Ichikawa N."/>
            <person name="Narita S."/>
            <person name="Aoki N."/>
            <person name="Miura H."/>
            <person name="Matsushita S."/>
            <person name="Sekigawa T."/>
            <person name="Yamagata H."/>
            <person name="Yoshikawa H."/>
            <person name="Udaka S."/>
            <person name="Tanikawa S."/>
            <person name="Fujita N."/>
        </authorList>
    </citation>
    <scope>NUCLEOTIDE SEQUENCE [LARGE SCALE GENOMIC DNA]</scope>
    <source>
        <strain>47 / JCM 6285 / NBRC 100599</strain>
    </source>
</reference>
<organism>
    <name type="scientific">Brevibacillus brevis (strain 47 / JCM 6285 / NBRC 100599)</name>
    <dbReference type="NCBI Taxonomy" id="358681"/>
    <lineage>
        <taxon>Bacteria</taxon>
        <taxon>Bacillati</taxon>
        <taxon>Bacillota</taxon>
        <taxon>Bacilli</taxon>
        <taxon>Bacillales</taxon>
        <taxon>Paenibacillaceae</taxon>
        <taxon>Brevibacillus</taxon>
    </lineage>
</organism>